<sequence>MRFKAELMNAPEMRRALYRIAHEIVEANKGTEGLALVGIHTRGIPLAHRIARFIAEFEGKEVPVGVLDITLYRDDLTEIGYRPQVRETRIPFDLTGKAIVLVDDVLYTGRTARAALDALIDLGRPRRIYLAVLVDRGHRELPIRADFVGKNVPTSRSEVVKVKVEEVDGEDRVELWEREGA</sequence>
<reference key="1">
    <citation type="submission" date="2004-11" db="EMBL/GenBank/DDBJ databases">
        <title>Complete genome sequence of Thermus thermophilus HB8.</title>
        <authorList>
            <person name="Masui R."/>
            <person name="Kurokawa K."/>
            <person name="Nakagawa N."/>
            <person name="Tokunaga F."/>
            <person name="Koyama Y."/>
            <person name="Shibata T."/>
            <person name="Oshima T."/>
            <person name="Yokoyama S."/>
            <person name="Yasunaga T."/>
            <person name="Kuramitsu S."/>
        </authorList>
    </citation>
    <scope>NUCLEOTIDE SEQUENCE [LARGE SCALE GENOMIC DNA]</scope>
    <source>
        <strain>ATCC 27634 / DSM 579 / HB8</strain>
    </source>
</reference>
<reference key="2">
    <citation type="submission" date="2003-06" db="PDB data bank">
        <authorList>
            <consortium name="RIKEN structural genomics initiative (RSGI)"/>
            <person name="Matsuura T."/>
            <person name="Sakai H."/>
            <person name="Terada T."/>
            <person name="Shirouzu M."/>
            <person name="Kuramitsu S."/>
            <person name="Yokoyama S."/>
        </authorList>
    </citation>
    <scope>X-RAY CRYSTALLOGRAPHY (2.7 ANGSTROMS)</scope>
</reference>
<proteinExistence type="evidence at protein level"/>
<keyword id="KW-0002">3D-structure</keyword>
<keyword id="KW-0328">Glycosyltransferase</keyword>
<keyword id="KW-1185">Reference proteome</keyword>
<keyword id="KW-0678">Repressor</keyword>
<keyword id="KW-0694">RNA-binding</keyword>
<keyword id="KW-0804">Transcription</keyword>
<keyword id="KW-0805">Transcription regulation</keyword>
<keyword id="KW-0806">Transcription termination</keyword>
<keyword id="KW-0808">Transferase</keyword>
<gene>
    <name type="primary">pyrR</name>
    <name type="ordered locus">TTHA0783</name>
</gene>
<name>PYRR_THET8</name>
<dbReference type="EC" id="2.4.2.9"/>
<dbReference type="EMBL" id="AP008226">
    <property type="protein sequence ID" value="BAD70606.1"/>
    <property type="molecule type" value="Genomic_DNA"/>
</dbReference>
<dbReference type="RefSeq" id="WP_011172875.1">
    <property type="nucleotide sequence ID" value="NC_006461.1"/>
</dbReference>
<dbReference type="RefSeq" id="YP_144049.1">
    <property type="nucleotide sequence ID" value="NC_006461.1"/>
</dbReference>
<dbReference type="PDB" id="1UFR">
    <property type="method" value="X-ray"/>
    <property type="resolution" value="2.60 A"/>
    <property type="chains" value="A/B/C/D=1-181"/>
</dbReference>
<dbReference type="PDBsum" id="1UFR"/>
<dbReference type="SMR" id="Q5SK65"/>
<dbReference type="EnsemblBacteria" id="BAD70606">
    <property type="protein sequence ID" value="BAD70606"/>
    <property type="gene ID" value="BAD70606"/>
</dbReference>
<dbReference type="GeneID" id="3169141"/>
<dbReference type="KEGG" id="ttj:TTHA0783"/>
<dbReference type="PATRIC" id="fig|300852.9.peg.776"/>
<dbReference type="eggNOG" id="COG2065">
    <property type="taxonomic scope" value="Bacteria"/>
</dbReference>
<dbReference type="HOGENOM" id="CLU_094234_2_1_0"/>
<dbReference type="PhylomeDB" id="Q5SK65"/>
<dbReference type="EvolutionaryTrace" id="Q5SK65"/>
<dbReference type="Proteomes" id="UP000000532">
    <property type="component" value="Chromosome"/>
</dbReference>
<dbReference type="GO" id="GO:0003723">
    <property type="term" value="F:RNA binding"/>
    <property type="evidence" value="ECO:0007669"/>
    <property type="project" value="UniProtKB-KW"/>
</dbReference>
<dbReference type="GO" id="GO:0004845">
    <property type="term" value="F:uracil phosphoribosyltransferase activity"/>
    <property type="evidence" value="ECO:0007669"/>
    <property type="project" value="UniProtKB-UniRule"/>
</dbReference>
<dbReference type="GO" id="GO:0006353">
    <property type="term" value="P:DNA-templated transcription termination"/>
    <property type="evidence" value="ECO:0007669"/>
    <property type="project" value="UniProtKB-KW"/>
</dbReference>
<dbReference type="GO" id="GO:0006355">
    <property type="term" value="P:regulation of DNA-templated transcription"/>
    <property type="evidence" value="ECO:0007669"/>
    <property type="project" value="UniProtKB-UniRule"/>
</dbReference>
<dbReference type="CDD" id="cd06223">
    <property type="entry name" value="PRTases_typeI"/>
    <property type="match status" value="1"/>
</dbReference>
<dbReference type="FunFam" id="3.40.50.2020:FF:000020">
    <property type="entry name" value="Bifunctional protein PyrR"/>
    <property type="match status" value="1"/>
</dbReference>
<dbReference type="Gene3D" id="3.40.50.2020">
    <property type="match status" value="1"/>
</dbReference>
<dbReference type="HAMAP" id="MF_01219">
    <property type="entry name" value="PyrR"/>
    <property type="match status" value="1"/>
</dbReference>
<dbReference type="InterPro" id="IPR000836">
    <property type="entry name" value="PRibTrfase_dom"/>
</dbReference>
<dbReference type="InterPro" id="IPR029057">
    <property type="entry name" value="PRTase-like"/>
</dbReference>
<dbReference type="InterPro" id="IPR023050">
    <property type="entry name" value="PyrR"/>
</dbReference>
<dbReference type="InterPro" id="IPR050137">
    <property type="entry name" value="PyrR_bifunctional"/>
</dbReference>
<dbReference type="NCBIfam" id="NF003545">
    <property type="entry name" value="PRK05205.1-1"/>
    <property type="match status" value="1"/>
</dbReference>
<dbReference type="NCBIfam" id="NF003547">
    <property type="entry name" value="PRK05205.1-3"/>
    <property type="match status" value="1"/>
</dbReference>
<dbReference type="NCBIfam" id="NF003548">
    <property type="entry name" value="PRK05205.1-4"/>
    <property type="match status" value="1"/>
</dbReference>
<dbReference type="NCBIfam" id="NF003549">
    <property type="entry name" value="PRK05205.1-5"/>
    <property type="match status" value="1"/>
</dbReference>
<dbReference type="PANTHER" id="PTHR11608">
    <property type="entry name" value="BIFUNCTIONAL PROTEIN PYRR"/>
    <property type="match status" value="1"/>
</dbReference>
<dbReference type="PANTHER" id="PTHR11608:SF0">
    <property type="entry name" value="BIFUNCTIONAL PROTEIN PYRR"/>
    <property type="match status" value="1"/>
</dbReference>
<dbReference type="Pfam" id="PF00156">
    <property type="entry name" value="Pribosyltran"/>
    <property type="match status" value="1"/>
</dbReference>
<dbReference type="SUPFAM" id="SSF53271">
    <property type="entry name" value="PRTase-like"/>
    <property type="match status" value="1"/>
</dbReference>
<evidence type="ECO:0000250" key="1"/>
<evidence type="ECO:0000305" key="2"/>
<evidence type="ECO:0007829" key="3">
    <source>
        <dbReference type="PDB" id="1UFR"/>
    </source>
</evidence>
<accession>Q5SK65</accession>
<accession>P83822</accession>
<comment type="function">
    <text evidence="1">Probably regulates transcriptional attenuation of the pyrimidine nucleotide (pyr) operon in response to exogenous pyrimidines. In contrast to pyr attenuation in Bacillus, PyrR from Thermus could act as a translational repressor: the binding of PyrR at its proposed recognition site in the transcript would prevent initiation of translation of the leader peptide, resulting in terminator formation and reduced expression of downstream genes (By similarity). Also displays uracil phosphoribosyltransferase activity (By similarity).</text>
</comment>
<comment type="catalytic activity">
    <reaction>
        <text>UMP + diphosphate = 5-phospho-alpha-D-ribose 1-diphosphate + uracil</text>
        <dbReference type="Rhea" id="RHEA:13017"/>
        <dbReference type="ChEBI" id="CHEBI:17568"/>
        <dbReference type="ChEBI" id="CHEBI:33019"/>
        <dbReference type="ChEBI" id="CHEBI:57865"/>
        <dbReference type="ChEBI" id="CHEBI:58017"/>
        <dbReference type="EC" id="2.4.2.9"/>
    </reaction>
</comment>
<comment type="similarity">
    <text evidence="2">Belongs to the purine/pyrimidine phosphoribosyltransferase family. PyrR subfamily.</text>
</comment>
<feature type="chain" id="PRO_0000294122" description="Bifunctional protein PyrR">
    <location>
        <begin position="1"/>
        <end position="181"/>
    </location>
</feature>
<feature type="short sequence motif" description="PRPP-binding" evidence="1">
    <location>
        <begin position="99"/>
        <end position="111"/>
    </location>
</feature>
<feature type="binding site" description="in other chain" evidence="1">
    <location>
        <begin position="41"/>
        <end position="42"/>
    </location>
    <ligand>
        <name>substrate</name>
        <note>ligand shared between dimeric partners</note>
    </ligand>
</feature>
<feature type="binding site" evidence="1">
    <location>
        <position position="82"/>
    </location>
    <ligand>
        <name>substrate</name>
        <note>ligand shared between dimeric partners</note>
    </ligand>
</feature>
<feature type="binding site" description="in other chain" evidence="1">
    <location>
        <position position="86"/>
    </location>
    <ligand>
        <name>substrate</name>
        <note>ligand shared between dimeric partners</note>
    </ligand>
</feature>
<feature type="binding site" description="in other chain" evidence="1">
    <location>
        <begin position="103"/>
        <end position="111"/>
    </location>
    <ligand>
        <name>substrate</name>
        <note>ligand shared between dimeric partners</note>
    </ligand>
</feature>
<feature type="binding site" description="in other chain" evidence="1">
    <location>
        <position position="136"/>
    </location>
    <ligand>
        <name>substrate</name>
        <note>ligand shared between dimeric partners</note>
    </ligand>
</feature>
<feature type="binding site" description="in other chain" evidence="1">
    <location>
        <position position="160"/>
    </location>
    <ligand>
        <name>substrate</name>
        <note>ligand shared between dimeric partners</note>
    </ligand>
</feature>
<feature type="strand" evidence="3">
    <location>
        <begin position="3"/>
        <end position="9"/>
    </location>
</feature>
<feature type="helix" evidence="3">
    <location>
        <begin position="10"/>
        <end position="28"/>
    </location>
</feature>
<feature type="strand" evidence="3">
    <location>
        <begin position="34"/>
        <end position="39"/>
    </location>
</feature>
<feature type="turn" evidence="3">
    <location>
        <begin position="40"/>
        <end position="42"/>
    </location>
</feature>
<feature type="helix" evidence="3">
    <location>
        <begin position="43"/>
        <end position="58"/>
    </location>
</feature>
<feature type="strand" evidence="3">
    <location>
        <begin position="64"/>
        <end position="70"/>
    </location>
</feature>
<feature type="strand" evidence="3">
    <location>
        <begin position="84"/>
        <end position="90"/>
    </location>
</feature>
<feature type="strand" evidence="3">
    <location>
        <begin position="98"/>
        <end position="109"/>
    </location>
</feature>
<feature type="helix" evidence="3">
    <location>
        <begin position="110"/>
        <end position="122"/>
    </location>
</feature>
<feature type="strand" evidence="3">
    <location>
        <begin position="126"/>
        <end position="135"/>
    </location>
</feature>
<feature type="strand" evidence="3">
    <location>
        <begin position="140"/>
        <end position="143"/>
    </location>
</feature>
<feature type="strand" evidence="3">
    <location>
        <begin position="146"/>
        <end position="151"/>
    </location>
</feature>
<feature type="strand" evidence="3">
    <location>
        <begin position="159"/>
        <end position="163"/>
    </location>
</feature>
<feature type="helix" evidence="3">
    <location>
        <begin position="165"/>
        <end position="168"/>
    </location>
</feature>
<feature type="strand" evidence="3">
    <location>
        <begin position="172"/>
        <end position="176"/>
    </location>
</feature>
<protein>
    <recommendedName>
        <fullName>Bifunctional protein PyrR</fullName>
    </recommendedName>
    <domain>
        <recommendedName>
            <fullName>Pyrimidine operon regulatory protein</fullName>
        </recommendedName>
    </domain>
    <domain>
        <recommendedName>
            <fullName>Uracil phosphoribosyltransferase</fullName>
            <shortName>UPRTase</shortName>
            <ecNumber>2.4.2.9</ecNumber>
        </recommendedName>
    </domain>
</protein>
<organism>
    <name type="scientific">Thermus thermophilus (strain ATCC 27634 / DSM 579 / HB8)</name>
    <dbReference type="NCBI Taxonomy" id="300852"/>
    <lineage>
        <taxon>Bacteria</taxon>
        <taxon>Thermotogati</taxon>
        <taxon>Deinococcota</taxon>
        <taxon>Deinococci</taxon>
        <taxon>Thermales</taxon>
        <taxon>Thermaceae</taxon>
        <taxon>Thermus</taxon>
    </lineage>
</organism>